<protein>
    <recommendedName>
        <fullName>Peptide chain release factor 2</fullName>
        <shortName>RF-2</shortName>
    </recommendedName>
</protein>
<sequence>MELAEIRNELEKTAQQIKDFRGSLDLDSMEVRIAELEDQMLDPNFWNDQQAAQKVINESNGYKETYQAFHALEEEQESMEISLELLKEEADEDLQEELEKDIKAYMATISEFELKLMLSDPYDKNNAILELHPGAGGTESQDWGSMLLRMYQRWSEKKGFKVEMLDYQAGDEAGIKSVTLLIKGHNAYGYLKAEKGVHRLVRISPFDSSGRRHTSFVSVDVMPELDDDIEIEVRTEDLKIDTYRATGAGGQHINTTDSAVRMTHIPSGIVVTCQSERSQLKNREQAMKMLKTKLYQKEQEEKERELAEIRGEQKEIGWGSQIRSYVFHPYSMVKDHRTNYETGNIQAVMDGDLDEFINAYLRSRIG</sequence>
<accession>Q71WR9</accession>
<keyword id="KW-0963">Cytoplasm</keyword>
<keyword id="KW-0488">Methylation</keyword>
<keyword id="KW-0648">Protein biosynthesis</keyword>
<keyword id="KW-0688">Ribosomal frameshifting</keyword>
<evidence type="ECO:0000250" key="1"/>
<evidence type="ECO:0000305" key="2"/>
<dbReference type="EMBL" id="AE017262">
    <property type="protein sequence ID" value="AAT05247.1"/>
    <property type="molecule type" value="Genomic_DNA"/>
</dbReference>
<dbReference type="SMR" id="Q71WR9"/>
<dbReference type="KEGG" id="lmf:LMOf2365_2482"/>
<dbReference type="HOGENOM" id="CLU_221244_1_0_9"/>
<dbReference type="GO" id="GO:0005737">
    <property type="term" value="C:cytoplasm"/>
    <property type="evidence" value="ECO:0007669"/>
    <property type="project" value="UniProtKB-SubCell"/>
</dbReference>
<dbReference type="GO" id="GO:0016149">
    <property type="term" value="F:translation release factor activity, codon specific"/>
    <property type="evidence" value="ECO:0007669"/>
    <property type="project" value="UniProtKB-UniRule"/>
</dbReference>
<dbReference type="GO" id="GO:0075523">
    <property type="term" value="P:viral translational frameshifting"/>
    <property type="evidence" value="ECO:0007669"/>
    <property type="project" value="UniProtKB-KW"/>
</dbReference>
<dbReference type="FunFam" id="3.30.160.20:FF:000010">
    <property type="entry name" value="Peptide chain release factor 2"/>
    <property type="match status" value="1"/>
</dbReference>
<dbReference type="Gene3D" id="3.30.160.20">
    <property type="match status" value="1"/>
</dbReference>
<dbReference type="Gene3D" id="3.30.70.1660">
    <property type="match status" value="1"/>
</dbReference>
<dbReference type="Gene3D" id="1.20.58.410">
    <property type="entry name" value="Release factor"/>
    <property type="match status" value="1"/>
</dbReference>
<dbReference type="HAMAP" id="MF_00094">
    <property type="entry name" value="Rel_fac_2"/>
    <property type="match status" value="1"/>
</dbReference>
<dbReference type="InterPro" id="IPR005139">
    <property type="entry name" value="PCRF"/>
</dbReference>
<dbReference type="InterPro" id="IPR000352">
    <property type="entry name" value="Pep_chain_release_fac_I"/>
</dbReference>
<dbReference type="InterPro" id="IPR045853">
    <property type="entry name" value="Pep_chain_release_fac_I_sf"/>
</dbReference>
<dbReference type="InterPro" id="IPR004374">
    <property type="entry name" value="PrfB"/>
</dbReference>
<dbReference type="NCBIfam" id="TIGR00020">
    <property type="entry name" value="prfB"/>
    <property type="match status" value="1"/>
</dbReference>
<dbReference type="PANTHER" id="PTHR43116:SF3">
    <property type="entry name" value="CLASS I PEPTIDE CHAIN RELEASE FACTOR"/>
    <property type="match status" value="1"/>
</dbReference>
<dbReference type="PANTHER" id="PTHR43116">
    <property type="entry name" value="PEPTIDE CHAIN RELEASE FACTOR 2"/>
    <property type="match status" value="1"/>
</dbReference>
<dbReference type="Pfam" id="PF03462">
    <property type="entry name" value="PCRF"/>
    <property type="match status" value="1"/>
</dbReference>
<dbReference type="Pfam" id="PF00472">
    <property type="entry name" value="RF-1"/>
    <property type="match status" value="1"/>
</dbReference>
<dbReference type="SMART" id="SM00937">
    <property type="entry name" value="PCRF"/>
    <property type="match status" value="1"/>
</dbReference>
<dbReference type="SUPFAM" id="SSF75620">
    <property type="entry name" value="Release factor"/>
    <property type="match status" value="1"/>
</dbReference>
<dbReference type="PROSITE" id="PS00745">
    <property type="entry name" value="RF_PROK_I"/>
    <property type="match status" value="1"/>
</dbReference>
<proteinExistence type="inferred from homology"/>
<comment type="function">
    <text evidence="1">Peptide chain release factor 2 directs the termination of translation in response to the peptide chain termination codons UGA and UAA.</text>
</comment>
<comment type="subcellular location">
    <subcellularLocation>
        <location evidence="1">Cytoplasm</location>
    </subcellularLocation>
</comment>
<comment type="PTM">
    <text evidence="1">Methylated by PrmC. Methylation increases the termination efficiency of RF2 (By similarity).</text>
</comment>
<comment type="miscellaneous">
    <text evidence="1">The gene for this protein contains a UGA in-frame termination codon after Leu-24; a naturally occurring frameshift enables complete translation of RF-2. This provides a mechanism for the protein to regulate its own production (By similarity).</text>
</comment>
<comment type="similarity">
    <text evidence="2">Belongs to the prokaryotic/mitochondrial release factor family.</text>
</comment>
<reference key="1">
    <citation type="journal article" date="2004" name="Nucleic Acids Res.">
        <title>Whole genome comparisons of serotype 4b and 1/2a strains of the food-borne pathogen Listeria monocytogenes reveal new insights into the core genome components of this species.</title>
        <authorList>
            <person name="Nelson K.E."/>
            <person name="Fouts D.E."/>
            <person name="Mongodin E.F."/>
            <person name="Ravel J."/>
            <person name="DeBoy R.T."/>
            <person name="Kolonay J.F."/>
            <person name="Rasko D.A."/>
            <person name="Angiuoli S.V."/>
            <person name="Gill S.R."/>
            <person name="Paulsen I.T."/>
            <person name="Peterson J.D."/>
            <person name="White O."/>
            <person name="Nelson W.C."/>
            <person name="Nierman W.C."/>
            <person name="Beanan M.J."/>
            <person name="Brinkac L.M."/>
            <person name="Daugherty S.C."/>
            <person name="Dodson R.J."/>
            <person name="Durkin A.S."/>
            <person name="Madupu R."/>
            <person name="Haft D.H."/>
            <person name="Selengut J."/>
            <person name="Van Aken S.E."/>
            <person name="Khouri H.M."/>
            <person name="Fedorova N."/>
            <person name="Forberger H.A."/>
            <person name="Tran B."/>
            <person name="Kathariou S."/>
            <person name="Wonderling L.D."/>
            <person name="Uhlich G.A."/>
            <person name="Bayles D.O."/>
            <person name="Luchansky J.B."/>
            <person name="Fraser C.M."/>
        </authorList>
    </citation>
    <scope>NUCLEOTIDE SEQUENCE [LARGE SCALE GENOMIC DNA]</scope>
    <source>
        <strain>F2365</strain>
    </source>
</reference>
<gene>
    <name type="primary">prfB</name>
    <name type="ordered locus">LMOf2365_2482</name>
</gene>
<name>RF2_LISMF</name>
<feature type="chain" id="PRO_0000166828" description="Peptide chain release factor 2">
    <location>
        <begin position="1"/>
        <end position="366"/>
    </location>
</feature>
<feature type="modified residue" description="N5-methylglutamine" evidence="1">
    <location>
        <position position="251"/>
    </location>
</feature>
<organism>
    <name type="scientific">Listeria monocytogenes serotype 4b (strain F2365)</name>
    <dbReference type="NCBI Taxonomy" id="265669"/>
    <lineage>
        <taxon>Bacteria</taxon>
        <taxon>Bacillati</taxon>
        <taxon>Bacillota</taxon>
        <taxon>Bacilli</taxon>
        <taxon>Bacillales</taxon>
        <taxon>Listeriaceae</taxon>
        <taxon>Listeria</taxon>
    </lineage>
</organism>